<feature type="initiator methionine" description="Removed" evidence="1">
    <location>
        <position position="1"/>
    </location>
</feature>
<feature type="chain" id="PRO_0000339995" description="Photosystem II protein D1" evidence="1">
    <location>
        <begin position="2"/>
        <end position="344"/>
    </location>
</feature>
<feature type="propeptide" id="PRO_0000339996" evidence="1">
    <location>
        <begin position="345"/>
        <end position="353"/>
    </location>
</feature>
<feature type="transmembrane region" description="Helical" evidence="1">
    <location>
        <begin position="29"/>
        <end position="46"/>
    </location>
</feature>
<feature type="transmembrane region" description="Helical" evidence="1">
    <location>
        <begin position="118"/>
        <end position="133"/>
    </location>
</feature>
<feature type="transmembrane region" description="Helical" evidence="1">
    <location>
        <begin position="142"/>
        <end position="156"/>
    </location>
</feature>
<feature type="transmembrane region" description="Helical" evidence="1">
    <location>
        <begin position="197"/>
        <end position="218"/>
    </location>
</feature>
<feature type="transmembrane region" description="Helical" evidence="1">
    <location>
        <begin position="274"/>
        <end position="288"/>
    </location>
</feature>
<feature type="binding site" description="axial binding residue" evidence="1">
    <location>
        <position position="118"/>
    </location>
    <ligand>
        <name>chlorophyll a</name>
        <dbReference type="ChEBI" id="CHEBI:58416"/>
        <label>ChlzD1</label>
    </ligand>
    <ligandPart>
        <name>Mg</name>
        <dbReference type="ChEBI" id="CHEBI:25107"/>
    </ligandPart>
</feature>
<feature type="binding site" evidence="1">
    <location>
        <position position="126"/>
    </location>
    <ligand>
        <name>pheophytin a</name>
        <dbReference type="ChEBI" id="CHEBI:136840"/>
        <label>D1</label>
    </ligand>
</feature>
<feature type="binding site" evidence="1">
    <location>
        <position position="170"/>
    </location>
    <ligand>
        <name>[CaMn4O5] cluster</name>
        <dbReference type="ChEBI" id="CHEBI:189552"/>
    </ligand>
</feature>
<feature type="binding site" evidence="1">
    <location>
        <position position="189"/>
    </location>
    <ligand>
        <name>[CaMn4O5] cluster</name>
        <dbReference type="ChEBI" id="CHEBI:189552"/>
    </ligand>
</feature>
<feature type="binding site" description="axial binding residue" evidence="1">
    <location>
        <position position="198"/>
    </location>
    <ligand>
        <name>chlorophyll a</name>
        <dbReference type="ChEBI" id="CHEBI:58416"/>
        <label>PD1</label>
    </ligand>
    <ligandPart>
        <name>Mg</name>
        <dbReference type="ChEBI" id="CHEBI:25107"/>
    </ligandPart>
</feature>
<feature type="binding site" evidence="1">
    <location>
        <position position="215"/>
    </location>
    <ligand>
        <name>a quinone</name>
        <dbReference type="ChEBI" id="CHEBI:132124"/>
        <label>B</label>
    </ligand>
</feature>
<feature type="binding site" evidence="1">
    <location>
        <position position="215"/>
    </location>
    <ligand>
        <name>Fe cation</name>
        <dbReference type="ChEBI" id="CHEBI:24875"/>
        <note>ligand shared with heterodimeric partner</note>
    </ligand>
</feature>
<feature type="binding site" evidence="1">
    <location>
        <begin position="264"/>
        <end position="265"/>
    </location>
    <ligand>
        <name>a quinone</name>
        <dbReference type="ChEBI" id="CHEBI:132124"/>
        <label>B</label>
    </ligand>
</feature>
<feature type="binding site" evidence="1">
    <location>
        <position position="272"/>
    </location>
    <ligand>
        <name>Fe cation</name>
        <dbReference type="ChEBI" id="CHEBI:24875"/>
        <note>ligand shared with heterodimeric partner</note>
    </ligand>
</feature>
<feature type="binding site" evidence="1">
    <location>
        <position position="332"/>
    </location>
    <ligand>
        <name>[CaMn4O5] cluster</name>
        <dbReference type="ChEBI" id="CHEBI:189552"/>
    </ligand>
</feature>
<feature type="binding site" evidence="1">
    <location>
        <position position="333"/>
    </location>
    <ligand>
        <name>[CaMn4O5] cluster</name>
        <dbReference type="ChEBI" id="CHEBI:189552"/>
    </ligand>
</feature>
<feature type="binding site" evidence="1">
    <location>
        <position position="342"/>
    </location>
    <ligand>
        <name>[CaMn4O5] cluster</name>
        <dbReference type="ChEBI" id="CHEBI:189552"/>
    </ligand>
</feature>
<feature type="binding site" evidence="1">
    <location>
        <position position="344"/>
    </location>
    <ligand>
        <name>[CaMn4O5] cluster</name>
        <dbReference type="ChEBI" id="CHEBI:189552"/>
    </ligand>
</feature>
<feature type="site" description="Tyrosine radical intermediate" evidence="1">
    <location>
        <position position="161"/>
    </location>
</feature>
<feature type="site" description="Stabilizes free radical intermediate" evidence="1">
    <location>
        <position position="190"/>
    </location>
</feature>
<feature type="site" description="Cleavage; by CTPA" evidence="1">
    <location>
        <begin position="344"/>
        <end position="345"/>
    </location>
</feature>
<feature type="modified residue" description="N-acetylthreonine" evidence="1">
    <location>
        <position position="2"/>
    </location>
</feature>
<feature type="modified residue" description="Phosphothreonine" evidence="1">
    <location>
        <position position="2"/>
    </location>
</feature>
<comment type="function">
    <text evidence="1">Photosystem II (PSII) is a light-driven water:plastoquinone oxidoreductase that uses light energy to abstract electrons from H(2)O, generating O(2) and a proton gradient subsequently used for ATP formation. It consists of a core antenna complex that captures photons, and an electron transfer chain that converts photonic excitation into a charge separation. The D1/D2 (PsbA/PsbD) reaction center heterodimer binds P680, the primary electron donor of PSII as well as several subsequent electron acceptors.</text>
</comment>
<comment type="catalytic activity">
    <reaction evidence="1">
        <text>2 a plastoquinone + 4 hnu + 2 H2O = 2 a plastoquinol + O2</text>
        <dbReference type="Rhea" id="RHEA:36359"/>
        <dbReference type="Rhea" id="RHEA-COMP:9561"/>
        <dbReference type="Rhea" id="RHEA-COMP:9562"/>
        <dbReference type="ChEBI" id="CHEBI:15377"/>
        <dbReference type="ChEBI" id="CHEBI:15379"/>
        <dbReference type="ChEBI" id="CHEBI:17757"/>
        <dbReference type="ChEBI" id="CHEBI:30212"/>
        <dbReference type="ChEBI" id="CHEBI:62192"/>
        <dbReference type="EC" id="1.10.3.9"/>
    </reaction>
</comment>
<comment type="cofactor">
    <text evidence="1">The D1/D2 heterodimer binds P680, chlorophylls that are the primary electron donor of PSII, and subsequent electron acceptors. It shares a non-heme iron and each subunit binds pheophytin, quinone, additional chlorophylls, carotenoids and lipids. D1 provides most of the ligands for the Mn4-Ca-O5 cluster of the oxygen-evolving complex (OEC). There is also a Cl(-1) ion associated with D1 and D2, which is required for oxygen evolution. The PSII complex binds additional chlorophylls, carotenoids and specific lipids.</text>
</comment>
<comment type="subunit">
    <text evidence="1">PSII is composed of 1 copy each of membrane proteins PsbA, PsbB, PsbC, PsbD, PsbE, PsbF, PsbH, PsbI, PsbJ, PsbK, PsbL, PsbM, PsbT, PsbX, PsbY, PsbZ, Psb30/Ycf12, at least 3 peripheral proteins of the oxygen-evolving complex and a large number of cofactors. It forms dimeric complexes.</text>
</comment>
<comment type="subcellular location">
    <subcellularLocation>
        <location evidence="1">Plastid</location>
        <location evidence="1">Chloroplast thylakoid membrane</location>
        <topology evidence="1">Multi-pass membrane protein</topology>
    </subcellularLocation>
</comment>
<comment type="PTM">
    <text evidence="1">Tyr-161 forms a radical intermediate that is referred to as redox-active TyrZ, YZ or Y-Z.</text>
</comment>
<comment type="PTM">
    <text evidence="1">C-terminally processed by CTPA; processing is essential to allow assembly of the oxygen-evolving complex and thus photosynthetic growth.</text>
</comment>
<comment type="miscellaneous">
    <text evidence="1">2 of the reaction center chlorophylls (ChlD1 and ChlD2) are entirely coordinated by water.</text>
</comment>
<comment type="miscellaneous">
    <text evidence="1">Herbicides such as atrazine, BNT, diuron or ioxynil bind in the Q(B) binding site and block subsequent electron transfer.</text>
</comment>
<comment type="similarity">
    <text evidence="1">Belongs to the reaction center PufL/M/PsbA/D family.</text>
</comment>
<evidence type="ECO:0000255" key="1">
    <source>
        <dbReference type="HAMAP-Rule" id="MF_01379"/>
    </source>
</evidence>
<accession>A0ZZ15</accession>
<gene>
    <name evidence="1" type="primary">psbA</name>
</gene>
<geneLocation type="chloroplast"/>
<name>PSBA_GOSBA</name>
<proteinExistence type="inferred from homology"/>
<protein>
    <recommendedName>
        <fullName evidence="1">Photosystem II protein D1</fullName>
        <shortName evidence="1">PSII D1 protein</shortName>
        <ecNumber evidence="1">1.10.3.9</ecNumber>
    </recommendedName>
    <alternativeName>
        <fullName evidence="1">Photosystem II Q(B) protein</fullName>
    </alternativeName>
</protein>
<keyword id="KW-0007">Acetylation</keyword>
<keyword id="KW-0106">Calcium</keyword>
<keyword id="KW-0148">Chlorophyll</keyword>
<keyword id="KW-0150">Chloroplast</keyword>
<keyword id="KW-0157">Chromophore</keyword>
<keyword id="KW-0249">Electron transport</keyword>
<keyword id="KW-0359">Herbicide resistance</keyword>
<keyword id="KW-0408">Iron</keyword>
<keyword id="KW-0460">Magnesium</keyword>
<keyword id="KW-0464">Manganese</keyword>
<keyword id="KW-0472">Membrane</keyword>
<keyword id="KW-0479">Metal-binding</keyword>
<keyword id="KW-0560">Oxidoreductase</keyword>
<keyword id="KW-0597">Phosphoprotein</keyword>
<keyword id="KW-0602">Photosynthesis</keyword>
<keyword id="KW-0604">Photosystem II</keyword>
<keyword id="KW-0934">Plastid</keyword>
<keyword id="KW-0793">Thylakoid</keyword>
<keyword id="KW-0812">Transmembrane</keyword>
<keyword id="KW-1133">Transmembrane helix</keyword>
<keyword id="KW-0813">Transport</keyword>
<dbReference type="EC" id="1.10.3.9" evidence="1"/>
<dbReference type="EMBL" id="AP009123">
    <property type="protein sequence ID" value="BAF41227.1"/>
    <property type="molecule type" value="Genomic_DNA"/>
</dbReference>
<dbReference type="RefSeq" id="YP_913167.1">
    <property type="nucleotide sequence ID" value="NC_008641.1"/>
</dbReference>
<dbReference type="SMR" id="A0ZZ15"/>
<dbReference type="GeneID" id="4575216"/>
<dbReference type="GO" id="GO:0009535">
    <property type="term" value="C:chloroplast thylakoid membrane"/>
    <property type="evidence" value="ECO:0007669"/>
    <property type="project" value="UniProtKB-SubCell"/>
</dbReference>
<dbReference type="GO" id="GO:0009523">
    <property type="term" value="C:photosystem II"/>
    <property type="evidence" value="ECO:0007669"/>
    <property type="project" value="UniProtKB-KW"/>
</dbReference>
<dbReference type="GO" id="GO:0016168">
    <property type="term" value="F:chlorophyll binding"/>
    <property type="evidence" value="ECO:0007669"/>
    <property type="project" value="UniProtKB-UniRule"/>
</dbReference>
<dbReference type="GO" id="GO:0045156">
    <property type="term" value="F:electron transporter, transferring electrons within the cyclic electron transport pathway of photosynthesis activity"/>
    <property type="evidence" value="ECO:0007669"/>
    <property type="project" value="InterPro"/>
</dbReference>
<dbReference type="GO" id="GO:0005506">
    <property type="term" value="F:iron ion binding"/>
    <property type="evidence" value="ECO:0007669"/>
    <property type="project" value="UniProtKB-UniRule"/>
</dbReference>
<dbReference type="GO" id="GO:0016682">
    <property type="term" value="F:oxidoreductase activity, acting on diphenols and related substances as donors, oxygen as acceptor"/>
    <property type="evidence" value="ECO:0007669"/>
    <property type="project" value="UniProtKB-UniRule"/>
</dbReference>
<dbReference type="GO" id="GO:0010242">
    <property type="term" value="F:oxygen evolving activity"/>
    <property type="evidence" value="ECO:0007669"/>
    <property type="project" value="UniProtKB-EC"/>
</dbReference>
<dbReference type="GO" id="GO:0009772">
    <property type="term" value="P:photosynthetic electron transport in photosystem II"/>
    <property type="evidence" value="ECO:0007669"/>
    <property type="project" value="InterPro"/>
</dbReference>
<dbReference type="GO" id="GO:0009635">
    <property type="term" value="P:response to herbicide"/>
    <property type="evidence" value="ECO:0007669"/>
    <property type="project" value="UniProtKB-KW"/>
</dbReference>
<dbReference type="CDD" id="cd09289">
    <property type="entry name" value="Photosystem-II_D1"/>
    <property type="match status" value="1"/>
</dbReference>
<dbReference type="FunFam" id="1.20.85.10:FF:000002">
    <property type="entry name" value="Photosystem II protein D1"/>
    <property type="match status" value="1"/>
</dbReference>
<dbReference type="Gene3D" id="1.20.85.10">
    <property type="entry name" value="Photosystem II protein D1-like"/>
    <property type="match status" value="1"/>
</dbReference>
<dbReference type="HAMAP" id="MF_01379">
    <property type="entry name" value="PSII_PsbA_D1"/>
    <property type="match status" value="1"/>
</dbReference>
<dbReference type="InterPro" id="IPR055266">
    <property type="entry name" value="D1/D2"/>
</dbReference>
<dbReference type="InterPro" id="IPR036854">
    <property type="entry name" value="Photo_II_D1/D2_sf"/>
</dbReference>
<dbReference type="InterPro" id="IPR000484">
    <property type="entry name" value="Photo_RC_L/M"/>
</dbReference>
<dbReference type="InterPro" id="IPR055265">
    <property type="entry name" value="Photo_RC_L/M_CS"/>
</dbReference>
<dbReference type="InterPro" id="IPR005867">
    <property type="entry name" value="PSII_D1"/>
</dbReference>
<dbReference type="NCBIfam" id="TIGR01151">
    <property type="entry name" value="psbA"/>
    <property type="match status" value="1"/>
</dbReference>
<dbReference type="PANTHER" id="PTHR33149:SF12">
    <property type="entry name" value="PHOTOSYSTEM II D2 PROTEIN"/>
    <property type="match status" value="1"/>
</dbReference>
<dbReference type="PANTHER" id="PTHR33149">
    <property type="entry name" value="PHOTOSYSTEM II PROTEIN D1"/>
    <property type="match status" value="1"/>
</dbReference>
<dbReference type="Pfam" id="PF00124">
    <property type="entry name" value="Photo_RC"/>
    <property type="match status" value="1"/>
</dbReference>
<dbReference type="PRINTS" id="PR00256">
    <property type="entry name" value="REACTNCENTRE"/>
</dbReference>
<dbReference type="SUPFAM" id="SSF81483">
    <property type="entry name" value="Bacterial photosystem II reaction centre, L and M subunits"/>
    <property type="match status" value="1"/>
</dbReference>
<dbReference type="PROSITE" id="PS00244">
    <property type="entry name" value="REACTION_CENTER"/>
    <property type="match status" value="1"/>
</dbReference>
<sequence length="353" mass="38883">MTAILERRESESLWGRFCNWITSTENRLYIGWFGVLMIPTLLTATSVFIIAFIAAPPVDIDGIREPVSGSLLYGNNIISGAIIPTSAAIGLHFYPIWEAASVDEWLYNGGPYELIVLHFLLGVACYMGREWELSFRLGMRPWIAVAYSAPVAAATAVFLIYPIGQGSFSDGMPLGISGTFNFMIVFQAEHNILMHPFHMLGVAGVFGGSLFSAMHGSLVTSSLIRETTENESANEGYRLGQEEETYNIVAAHGYFGRLIFQYASFNNSRSLHFFLAAWPVVGIWFTALGISTMAFNLNGFNFNQSVVDSQGRVINTWADIINRANLGMEVMHERNAHNLPLDLAAIEAPSTNG</sequence>
<organism>
    <name type="scientific">Gossypium barbadense</name>
    <name type="common">Sea Island cotton</name>
    <name type="synonym">Hibiscus barbadensis</name>
    <dbReference type="NCBI Taxonomy" id="3634"/>
    <lineage>
        <taxon>Eukaryota</taxon>
        <taxon>Viridiplantae</taxon>
        <taxon>Streptophyta</taxon>
        <taxon>Embryophyta</taxon>
        <taxon>Tracheophyta</taxon>
        <taxon>Spermatophyta</taxon>
        <taxon>Magnoliopsida</taxon>
        <taxon>eudicotyledons</taxon>
        <taxon>Gunneridae</taxon>
        <taxon>Pentapetalae</taxon>
        <taxon>rosids</taxon>
        <taxon>malvids</taxon>
        <taxon>Malvales</taxon>
        <taxon>Malvaceae</taxon>
        <taxon>Malvoideae</taxon>
        <taxon>Gossypium</taxon>
    </lineage>
</organism>
<reference key="1">
    <citation type="journal article" date="2006" name="Genes Genet. Syst.">
        <title>Complete nucleotide sequence of the cotton (Gossypium barbadense L.) chloroplast genome with a comparative analysis of sequences among 9 dicot plants.</title>
        <authorList>
            <person name="Ibrahim R.I.H."/>
            <person name="Azuma J."/>
            <person name="Sakamoto M."/>
        </authorList>
    </citation>
    <scope>NUCLEOTIDE SEQUENCE [LARGE SCALE GENOMIC DNA]</scope>
</reference>